<accession>A8X409</accession>
<sequence length="159" mass="18414">MQIWHMEPFPCGDRRLPHHVFPPKKITTTQLGALAGVQYYKVDLEDTASMKKRLSAVKTEKNVTFTDVFTVSETMLDFDDKMEQFYEAQTQKEDVISLVVEGTCYYDVEPEDDSWIRVQLEKGDLIVIPKGLSHRFTTTPQNFVKIQRFFSRKVEGTQG</sequence>
<organism>
    <name type="scientific">Caenorhabditis briggsae</name>
    <dbReference type="NCBI Taxonomy" id="6238"/>
    <lineage>
        <taxon>Eukaryota</taxon>
        <taxon>Metazoa</taxon>
        <taxon>Ecdysozoa</taxon>
        <taxon>Nematoda</taxon>
        <taxon>Chromadorea</taxon>
        <taxon>Rhabditida</taxon>
        <taxon>Rhabditina</taxon>
        <taxon>Rhabditomorpha</taxon>
        <taxon>Rhabditoidea</taxon>
        <taxon>Rhabditidae</taxon>
        <taxon>Peloderinae</taxon>
        <taxon>Caenorhabditis</taxon>
    </lineage>
</organism>
<gene>
    <name type="ORF">CBG06970</name>
</gene>
<keyword id="KW-0963">Cytoplasm</keyword>
<keyword id="KW-0539">Nucleus</keyword>
<keyword id="KW-1185">Reference proteome</keyword>
<dbReference type="EMBL" id="HE600960">
    <property type="protein sequence ID" value="CAP27369.2"/>
    <property type="molecule type" value="Genomic_DNA"/>
</dbReference>
<dbReference type="RefSeq" id="XP_045093428.1">
    <property type="nucleotide sequence ID" value="XM_045243251.1"/>
</dbReference>
<dbReference type="SMR" id="A8X409"/>
<dbReference type="FunCoup" id="A8X409">
    <property type="interactions" value="33"/>
</dbReference>
<dbReference type="STRING" id="6238.A8X409"/>
<dbReference type="EnsemblMetazoa" id="CBG06970.1">
    <property type="protein sequence ID" value="CBG06970.1"/>
    <property type="gene ID" value="WBGene00029150"/>
</dbReference>
<dbReference type="GeneID" id="8574114"/>
<dbReference type="WormBase" id="CBG06970">
    <property type="protein sequence ID" value="CBP25336"/>
    <property type="gene ID" value="WBGene00029150"/>
</dbReference>
<dbReference type="eggNOG" id="KOG2107">
    <property type="taxonomic scope" value="Eukaryota"/>
</dbReference>
<dbReference type="HOGENOM" id="CLU_090154_2_0_1"/>
<dbReference type="InParanoid" id="A8X409"/>
<dbReference type="OMA" id="YYKVDLD"/>
<dbReference type="OrthoDB" id="1867259at2759"/>
<dbReference type="Proteomes" id="UP000008549">
    <property type="component" value="Unassembled WGS sequence"/>
</dbReference>
<dbReference type="GO" id="GO:0005737">
    <property type="term" value="C:cytoplasm"/>
    <property type="evidence" value="ECO:0007669"/>
    <property type="project" value="UniProtKB-SubCell"/>
</dbReference>
<dbReference type="GO" id="GO:0005634">
    <property type="term" value="C:nucleus"/>
    <property type="evidence" value="ECO:0007669"/>
    <property type="project" value="UniProtKB-SubCell"/>
</dbReference>
<dbReference type="GO" id="GO:0010309">
    <property type="term" value="F:acireductone dioxygenase [iron(II)-requiring] activity"/>
    <property type="evidence" value="ECO:0000318"/>
    <property type="project" value="GO_Central"/>
</dbReference>
<dbReference type="GO" id="GO:0019509">
    <property type="term" value="P:L-methionine salvage from methylthioadenosine"/>
    <property type="evidence" value="ECO:0007669"/>
    <property type="project" value="InterPro"/>
</dbReference>
<dbReference type="GO" id="GO:0006555">
    <property type="term" value="P:methionine metabolic process"/>
    <property type="evidence" value="ECO:0000318"/>
    <property type="project" value="GO_Central"/>
</dbReference>
<dbReference type="CDD" id="cd02232">
    <property type="entry name" value="cupin_ARD"/>
    <property type="match status" value="1"/>
</dbReference>
<dbReference type="FunFam" id="2.60.120.10:FF:000149">
    <property type="entry name" value="1,2-dihydroxy-3-keto-5-methylthiopentene dioxygenase homolog"/>
    <property type="match status" value="1"/>
</dbReference>
<dbReference type="Gene3D" id="2.60.120.10">
    <property type="entry name" value="Jelly Rolls"/>
    <property type="match status" value="1"/>
</dbReference>
<dbReference type="HAMAP" id="MF_03154">
    <property type="entry name" value="Salvage_MtnD_euk"/>
    <property type="match status" value="1"/>
</dbReference>
<dbReference type="InterPro" id="IPR004313">
    <property type="entry name" value="ARD"/>
</dbReference>
<dbReference type="InterPro" id="IPR027496">
    <property type="entry name" value="ARD_euk"/>
</dbReference>
<dbReference type="InterPro" id="IPR014710">
    <property type="entry name" value="RmlC-like_jellyroll"/>
</dbReference>
<dbReference type="InterPro" id="IPR011051">
    <property type="entry name" value="RmlC_Cupin_sf"/>
</dbReference>
<dbReference type="PANTHER" id="PTHR23418">
    <property type="entry name" value="ACIREDUCTONE DIOXYGENASE"/>
    <property type="match status" value="1"/>
</dbReference>
<dbReference type="PANTHER" id="PTHR23418:SF10">
    <property type="entry name" value="INACTIVE ACIREDUCTONE DIOXYGENASE 1-RELATED"/>
    <property type="match status" value="1"/>
</dbReference>
<dbReference type="Pfam" id="PF03079">
    <property type="entry name" value="ARD"/>
    <property type="match status" value="1"/>
</dbReference>
<dbReference type="SUPFAM" id="SSF51182">
    <property type="entry name" value="RmlC-like cupins"/>
    <property type="match status" value="1"/>
</dbReference>
<reference key="1">
    <citation type="journal article" date="2003" name="PLoS Biol.">
        <title>The genome sequence of Caenorhabditis briggsae: a platform for comparative genomics.</title>
        <authorList>
            <person name="Stein L.D."/>
            <person name="Bao Z."/>
            <person name="Blasiar D."/>
            <person name="Blumenthal T."/>
            <person name="Brent M.R."/>
            <person name="Chen N."/>
            <person name="Chinwalla A."/>
            <person name="Clarke L."/>
            <person name="Clee C."/>
            <person name="Coghlan A."/>
            <person name="Coulson A."/>
            <person name="D'Eustachio P."/>
            <person name="Fitch D.H.A."/>
            <person name="Fulton L.A."/>
            <person name="Fulton R.E."/>
            <person name="Griffiths-Jones S."/>
            <person name="Harris T.W."/>
            <person name="Hillier L.W."/>
            <person name="Kamath R."/>
            <person name="Kuwabara P.E."/>
            <person name="Mardis E.R."/>
            <person name="Marra M.A."/>
            <person name="Miner T.L."/>
            <person name="Minx P."/>
            <person name="Mullikin J.C."/>
            <person name="Plumb R.W."/>
            <person name="Rogers J."/>
            <person name="Schein J.E."/>
            <person name="Sohrmann M."/>
            <person name="Spieth J."/>
            <person name="Stajich J.E."/>
            <person name="Wei C."/>
            <person name="Willey D."/>
            <person name="Wilson R.K."/>
            <person name="Durbin R.M."/>
            <person name="Waterston R.H."/>
        </authorList>
    </citation>
    <scope>NUCLEOTIDE SEQUENCE [LARGE SCALE GENOMIC DNA]</scope>
    <source>
        <strain>AF16</strain>
    </source>
</reference>
<proteinExistence type="inferred from homology"/>
<comment type="function">
    <text evidence="1">Probable inactive acireductone dioxygenase.</text>
</comment>
<comment type="subcellular location">
    <subcellularLocation>
        <location evidence="1">Cytoplasm</location>
    </subcellularLocation>
    <subcellularLocation>
        <location evidence="1">Nucleus</location>
    </subcellularLocation>
</comment>
<comment type="similarity">
    <text evidence="1">Belongs to the acireductone dioxygenase (ARD) family.</text>
</comment>
<comment type="caution">
    <text evidence="2">This enzyme lacks one or more conserved metal-binding sites. It may be non-functional.</text>
</comment>
<name>MTND2_CAEBR</name>
<feature type="chain" id="PRO_0000414338" description="Probable inactive acireductone dioxygenase 2">
    <location>
        <begin position="1"/>
        <end position="159"/>
    </location>
</feature>
<protein>
    <recommendedName>
        <fullName evidence="1">Probable inactive acireductone dioxygenase 2</fullName>
    </recommendedName>
</protein>
<evidence type="ECO:0000255" key="1">
    <source>
        <dbReference type="HAMAP-Rule" id="MF_03154"/>
    </source>
</evidence>
<evidence type="ECO:0000305" key="2"/>